<keyword id="KW-0066">ATP synthesis</keyword>
<keyword id="KW-1003">Cell membrane</keyword>
<keyword id="KW-0139">CF(1)</keyword>
<keyword id="KW-0375">Hydrogen ion transport</keyword>
<keyword id="KW-0406">Ion transport</keyword>
<keyword id="KW-0472">Membrane</keyword>
<keyword id="KW-1185">Reference proteome</keyword>
<keyword id="KW-0813">Transport</keyword>
<evidence type="ECO:0000255" key="1">
    <source>
        <dbReference type="HAMAP-Rule" id="MF_01416"/>
    </source>
</evidence>
<reference key="1">
    <citation type="journal article" date="2001" name="Genome Res.">
        <title>The complete genome sequence of the lactic acid bacterium Lactococcus lactis ssp. lactis IL1403.</title>
        <authorList>
            <person name="Bolotin A."/>
            <person name="Wincker P."/>
            <person name="Mauger S."/>
            <person name="Jaillon O."/>
            <person name="Malarme K."/>
            <person name="Weissenbach J."/>
            <person name="Ehrlich S.D."/>
            <person name="Sorokin A."/>
        </authorList>
    </citation>
    <scope>NUCLEOTIDE SEQUENCE [LARGE SCALE GENOMIC DNA]</scope>
    <source>
        <strain>IL1403</strain>
    </source>
</reference>
<protein>
    <recommendedName>
        <fullName evidence="1">ATP synthase subunit delta</fullName>
    </recommendedName>
    <alternativeName>
        <fullName evidence="1">ATP synthase F(1) sector subunit delta</fullName>
    </alternativeName>
    <alternativeName>
        <fullName evidence="1">F-type ATPase subunit delta</fullName>
        <shortName evidence="1">F-ATPase subunit delta</shortName>
    </alternativeName>
</protein>
<feature type="chain" id="PRO_0000382110" description="ATP synthase subunit delta">
    <location>
        <begin position="1"/>
        <end position="175"/>
    </location>
</feature>
<accession>Q9CER7</accession>
<name>ATPD_LACLA</name>
<sequence>MTKVNSQKYSKALLEVAQEKGQLEAILSEVSEMIQLFKEDNLVAFLSSEVYSFSAKSELIDTLLQTSSEVMSNFLNTVRSNGRLGDLGEILDETKNAADDMFKIADVGVVSSIALTNAQIEKFTAMAKAKFDLNEVTVINTVNEKILGGFIVNSRGKIIDASLKTQLAKIAAEIL</sequence>
<proteinExistence type="inferred from homology"/>
<dbReference type="EMBL" id="AE005176">
    <property type="protein sequence ID" value="AAK05865.1"/>
    <property type="molecule type" value="Genomic_DNA"/>
</dbReference>
<dbReference type="PIR" id="G86845">
    <property type="entry name" value="G86845"/>
</dbReference>
<dbReference type="RefSeq" id="NP_267923.1">
    <property type="nucleotide sequence ID" value="NC_002662.1"/>
</dbReference>
<dbReference type="RefSeq" id="WP_010906127.1">
    <property type="nucleotide sequence ID" value="NC_002662.1"/>
</dbReference>
<dbReference type="SMR" id="Q9CER7"/>
<dbReference type="PaxDb" id="272623-L10679"/>
<dbReference type="EnsemblBacteria" id="AAK05865">
    <property type="protein sequence ID" value="AAK05865"/>
    <property type="gene ID" value="L10679"/>
</dbReference>
<dbReference type="KEGG" id="lla:L10679"/>
<dbReference type="PATRIC" id="fig|272623.7.peg.1894"/>
<dbReference type="eggNOG" id="COG0712">
    <property type="taxonomic scope" value="Bacteria"/>
</dbReference>
<dbReference type="HOGENOM" id="CLU_085114_1_2_9"/>
<dbReference type="OrthoDB" id="9802471at2"/>
<dbReference type="Proteomes" id="UP000002196">
    <property type="component" value="Chromosome"/>
</dbReference>
<dbReference type="GO" id="GO:0005886">
    <property type="term" value="C:plasma membrane"/>
    <property type="evidence" value="ECO:0007669"/>
    <property type="project" value="UniProtKB-SubCell"/>
</dbReference>
<dbReference type="GO" id="GO:0045259">
    <property type="term" value="C:proton-transporting ATP synthase complex"/>
    <property type="evidence" value="ECO:0007669"/>
    <property type="project" value="UniProtKB-KW"/>
</dbReference>
<dbReference type="GO" id="GO:0046933">
    <property type="term" value="F:proton-transporting ATP synthase activity, rotational mechanism"/>
    <property type="evidence" value="ECO:0007669"/>
    <property type="project" value="UniProtKB-UniRule"/>
</dbReference>
<dbReference type="Gene3D" id="1.10.520.20">
    <property type="entry name" value="N-terminal domain of the delta subunit of the F1F0-ATP synthase"/>
    <property type="match status" value="1"/>
</dbReference>
<dbReference type="HAMAP" id="MF_01416">
    <property type="entry name" value="ATP_synth_delta_bact"/>
    <property type="match status" value="1"/>
</dbReference>
<dbReference type="InterPro" id="IPR026015">
    <property type="entry name" value="ATP_synth_OSCP/delta_N_sf"/>
</dbReference>
<dbReference type="InterPro" id="IPR000711">
    <property type="entry name" value="ATPase_OSCP/dsu"/>
</dbReference>
<dbReference type="NCBIfam" id="TIGR01145">
    <property type="entry name" value="ATP_synt_delta"/>
    <property type="match status" value="1"/>
</dbReference>
<dbReference type="NCBIfam" id="NF004401">
    <property type="entry name" value="PRK05758.2-1"/>
    <property type="match status" value="1"/>
</dbReference>
<dbReference type="PANTHER" id="PTHR11910">
    <property type="entry name" value="ATP SYNTHASE DELTA CHAIN"/>
    <property type="match status" value="1"/>
</dbReference>
<dbReference type="Pfam" id="PF00213">
    <property type="entry name" value="OSCP"/>
    <property type="match status" value="1"/>
</dbReference>
<dbReference type="PRINTS" id="PR00125">
    <property type="entry name" value="ATPASEDELTA"/>
</dbReference>
<dbReference type="SUPFAM" id="SSF47928">
    <property type="entry name" value="N-terminal domain of the delta subunit of the F1F0-ATP synthase"/>
    <property type="match status" value="1"/>
</dbReference>
<organism>
    <name type="scientific">Lactococcus lactis subsp. lactis (strain IL1403)</name>
    <name type="common">Streptococcus lactis</name>
    <dbReference type="NCBI Taxonomy" id="272623"/>
    <lineage>
        <taxon>Bacteria</taxon>
        <taxon>Bacillati</taxon>
        <taxon>Bacillota</taxon>
        <taxon>Bacilli</taxon>
        <taxon>Lactobacillales</taxon>
        <taxon>Streptococcaceae</taxon>
        <taxon>Lactococcus</taxon>
    </lineage>
</organism>
<gene>
    <name evidence="1" type="primary">atpH</name>
    <name type="ordered locus">LL1767</name>
    <name type="ORF">L106</name>
    <name type="ORF">L10679</name>
</gene>
<comment type="function">
    <text evidence="1">F(1)F(0) ATP synthase produces ATP from ADP in the presence of a proton or sodium gradient. F-type ATPases consist of two structural domains, F(1) containing the extramembraneous catalytic core and F(0) containing the membrane proton channel, linked together by a central stalk and a peripheral stalk. During catalysis, ATP synthesis in the catalytic domain of F(1) is coupled via a rotary mechanism of the central stalk subunits to proton translocation.</text>
</comment>
<comment type="function">
    <text evidence="1">This protein is part of the stalk that links CF(0) to CF(1). It either transmits conformational changes from CF(0) to CF(1) or is implicated in proton conduction.</text>
</comment>
<comment type="subunit">
    <text evidence="1">F-type ATPases have 2 components, F(1) - the catalytic core - and F(0) - the membrane proton channel. F(1) has five subunits: alpha(3), beta(3), gamma(1), delta(1), epsilon(1). F(0) has three main subunits: a(1), b(2) and c(10-14). The alpha and beta chains form an alternating ring which encloses part of the gamma chain. F(1) is attached to F(0) by a central stalk formed by the gamma and epsilon chains, while a peripheral stalk is formed by the delta and b chains.</text>
</comment>
<comment type="subcellular location">
    <subcellularLocation>
        <location evidence="1">Cell membrane</location>
        <topology evidence="1">Peripheral membrane protein</topology>
    </subcellularLocation>
</comment>
<comment type="similarity">
    <text evidence="1">Belongs to the ATPase delta chain family.</text>
</comment>